<dbReference type="EC" id="2.7.7.4" evidence="1"/>
<dbReference type="EMBL" id="AE016820">
    <property type="protein sequence ID" value="AAS54812.1"/>
    <property type="molecule type" value="Genomic_DNA"/>
</dbReference>
<dbReference type="RefSeq" id="NP_986988.1">
    <property type="nucleotide sequence ID" value="NM_212050.1"/>
</dbReference>
<dbReference type="SMR" id="Q74ZF6"/>
<dbReference type="FunCoup" id="Q74ZF6">
    <property type="interactions" value="601"/>
</dbReference>
<dbReference type="STRING" id="284811.Q74ZF6"/>
<dbReference type="EnsemblFungi" id="AAS54812">
    <property type="protein sequence ID" value="AAS54812"/>
    <property type="gene ID" value="AGOS_AGR322W"/>
</dbReference>
<dbReference type="GeneID" id="4623291"/>
<dbReference type="KEGG" id="ago:AGOS_AGR322W"/>
<dbReference type="eggNOG" id="KOG0636">
    <property type="taxonomic scope" value="Eukaryota"/>
</dbReference>
<dbReference type="HOGENOM" id="CLU_022950_1_0_1"/>
<dbReference type="InParanoid" id="Q74ZF6"/>
<dbReference type="OMA" id="EWFSFPE"/>
<dbReference type="OrthoDB" id="468at2759"/>
<dbReference type="UniPathway" id="UPA00140">
    <property type="reaction ID" value="UER00204"/>
</dbReference>
<dbReference type="Proteomes" id="UP000000591">
    <property type="component" value="Chromosome VII"/>
</dbReference>
<dbReference type="GO" id="GO:0005737">
    <property type="term" value="C:cytoplasm"/>
    <property type="evidence" value="ECO:0007669"/>
    <property type="project" value="UniProtKB-SubCell"/>
</dbReference>
<dbReference type="GO" id="GO:0005524">
    <property type="term" value="F:ATP binding"/>
    <property type="evidence" value="ECO:0007669"/>
    <property type="project" value="UniProtKB-KW"/>
</dbReference>
<dbReference type="GO" id="GO:0004781">
    <property type="term" value="F:sulfate adenylyltransferase (ATP) activity"/>
    <property type="evidence" value="ECO:0000318"/>
    <property type="project" value="GO_Central"/>
</dbReference>
<dbReference type="GO" id="GO:0019344">
    <property type="term" value="P:cysteine biosynthetic process"/>
    <property type="evidence" value="ECO:0007669"/>
    <property type="project" value="UniProtKB-KW"/>
</dbReference>
<dbReference type="GO" id="GO:0070814">
    <property type="term" value="P:hydrogen sulfide biosynthetic process"/>
    <property type="evidence" value="ECO:0007669"/>
    <property type="project" value="UniProtKB-UniRule"/>
</dbReference>
<dbReference type="GO" id="GO:0009086">
    <property type="term" value="P:methionine biosynthetic process"/>
    <property type="evidence" value="ECO:0007669"/>
    <property type="project" value="UniProtKB-KW"/>
</dbReference>
<dbReference type="GO" id="GO:0019379">
    <property type="term" value="P:sulfate assimilation, phosphoadenylyl sulfate reduction by phosphoadenylyl-sulfate reductase (thioredoxin)"/>
    <property type="evidence" value="ECO:0000318"/>
    <property type="project" value="GO_Central"/>
</dbReference>
<dbReference type="CDD" id="cd00517">
    <property type="entry name" value="ATPS"/>
    <property type="match status" value="1"/>
</dbReference>
<dbReference type="FunFam" id="3.10.400.10:FF:000006">
    <property type="entry name" value="Sulfate adenylyltransferase"/>
    <property type="match status" value="1"/>
</dbReference>
<dbReference type="FunFam" id="3.40.50.620:FF:000052">
    <property type="entry name" value="Sulfate adenylyltransferase"/>
    <property type="match status" value="1"/>
</dbReference>
<dbReference type="Gene3D" id="3.40.50.620">
    <property type="entry name" value="HUPs"/>
    <property type="match status" value="1"/>
</dbReference>
<dbReference type="Gene3D" id="3.40.50.300">
    <property type="entry name" value="P-loop containing nucleotide triphosphate hydrolases"/>
    <property type="match status" value="1"/>
</dbReference>
<dbReference type="Gene3D" id="3.10.400.10">
    <property type="entry name" value="Sulfate adenylyltransferase"/>
    <property type="match status" value="1"/>
</dbReference>
<dbReference type="HAMAP" id="MF_03106">
    <property type="entry name" value="Sulf_adenylyltr_euk"/>
    <property type="match status" value="1"/>
</dbReference>
<dbReference type="InterPro" id="IPR025980">
    <property type="entry name" value="ATP-Sase_PUA-like_dom"/>
</dbReference>
<dbReference type="InterPro" id="IPR027417">
    <property type="entry name" value="P-loop_NTPase"/>
</dbReference>
<dbReference type="InterPro" id="IPR015947">
    <property type="entry name" value="PUA-like_sf"/>
</dbReference>
<dbReference type="InterPro" id="IPR014729">
    <property type="entry name" value="Rossmann-like_a/b/a_fold"/>
</dbReference>
<dbReference type="InterPro" id="IPR027535">
    <property type="entry name" value="Sulf_adenylyltr_euk"/>
</dbReference>
<dbReference type="InterPro" id="IPR050512">
    <property type="entry name" value="Sulf_AdTrans/APS_kinase"/>
</dbReference>
<dbReference type="InterPro" id="IPR024951">
    <property type="entry name" value="Sulfurylase_cat_dom"/>
</dbReference>
<dbReference type="InterPro" id="IPR002650">
    <property type="entry name" value="Sulphate_adenylyltransferase"/>
</dbReference>
<dbReference type="NCBIfam" id="TIGR00339">
    <property type="entry name" value="sopT"/>
    <property type="match status" value="1"/>
</dbReference>
<dbReference type="PANTHER" id="PTHR42700">
    <property type="entry name" value="SULFATE ADENYLYLTRANSFERASE"/>
    <property type="match status" value="1"/>
</dbReference>
<dbReference type="PANTHER" id="PTHR42700:SF1">
    <property type="entry name" value="SULFATE ADENYLYLTRANSFERASE"/>
    <property type="match status" value="1"/>
</dbReference>
<dbReference type="Pfam" id="PF01747">
    <property type="entry name" value="ATP-sulfurylase"/>
    <property type="match status" value="1"/>
</dbReference>
<dbReference type="Pfam" id="PF14306">
    <property type="entry name" value="PUA_2"/>
    <property type="match status" value="1"/>
</dbReference>
<dbReference type="SUPFAM" id="SSF52374">
    <property type="entry name" value="Nucleotidylyl transferase"/>
    <property type="match status" value="1"/>
</dbReference>
<dbReference type="SUPFAM" id="SSF52540">
    <property type="entry name" value="P-loop containing nucleoside triphosphate hydrolases"/>
    <property type="match status" value="1"/>
</dbReference>
<dbReference type="SUPFAM" id="SSF88697">
    <property type="entry name" value="PUA domain-like"/>
    <property type="match status" value="1"/>
</dbReference>
<protein>
    <recommendedName>
        <fullName evidence="1">Sulfate adenylyltransferase</fullName>
        <ecNumber evidence="1">2.7.7.4</ecNumber>
    </recommendedName>
    <alternativeName>
        <fullName evidence="1">ATP-sulfurylase</fullName>
    </alternativeName>
    <alternativeName>
        <fullName evidence="1">Sulfate adenylate transferase</fullName>
        <shortName evidence="1">SAT</shortName>
    </alternativeName>
</protein>
<feature type="chain" id="PRO_0000283675" description="Sulfate adenylyltransferase">
    <location>
        <begin position="1"/>
        <end position="500"/>
    </location>
</feature>
<feature type="region of interest" description="N-terminal" evidence="1">
    <location>
        <begin position="1"/>
        <end position="165"/>
    </location>
</feature>
<feature type="region of interest" description="Catalytic" evidence="1">
    <location>
        <begin position="166"/>
        <end position="390"/>
    </location>
</feature>
<feature type="region of interest" description="Required for oligomerization; adenylyl-sulfate kinase-like" evidence="1">
    <location>
        <begin position="391"/>
        <end position="500"/>
    </location>
</feature>
<feature type="active site" evidence="1">
    <location>
        <position position="194"/>
    </location>
</feature>
<feature type="active site" evidence="1">
    <location>
        <position position="195"/>
    </location>
</feature>
<feature type="active site" evidence="1">
    <location>
        <position position="196"/>
    </location>
</feature>
<feature type="binding site" evidence="1">
    <location>
        <begin position="193"/>
        <end position="196"/>
    </location>
    <ligand>
        <name>ATP</name>
        <dbReference type="ChEBI" id="CHEBI:30616"/>
    </ligand>
</feature>
<feature type="binding site" evidence="1">
    <location>
        <position position="193"/>
    </location>
    <ligand>
        <name>sulfate</name>
        <dbReference type="ChEBI" id="CHEBI:16189"/>
    </ligand>
</feature>
<feature type="binding site" evidence="1">
    <location>
        <position position="195"/>
    </location>
    <ligand>
        <name>sulfate</name>
        <dbReference type="ChEBI" id="CHEBI:16189"/>
    </ligand>
</feature>
<feature type="binding site" evidence="1">
    <location>
        <begin position="287"/>
        <end position="290"/>
    </location>
    <ligand>
        <name>ATP</name>
        <dbReference type="ChEBI" id="CHEBI:30616"/>
    </ligand>
</feature>
<feature type="binding site" evidence="1">
    <location>
        <position position="291"/>
    </location>
    <ligand>
        <name>sulfate</name>
        <dbReference type="ChEBI" id="CHEBI:16189"/>
    </ligand>
</feature>
<feature type="binding site" evidence="1">
    <location>
        <position position="329"/>
    </location>
    <ligand>
        <name>ATP</name>
        <dbReference type="ChEBI" id="CHEBI:30616"/>
    </ligand>
</feature>
<feature type="site" description="Transition state stabilizer" evidence="1">
    <location>
        <position position="199"/>
    </location>
</feature>
<feature type="site" description="Transition state stabilizer" evidence="1">
    <location>
        <position position="202"/>
    </location>
</feature>
<feature type="site" description="Induces change in substrate recognition on ATP binding" evidence="1">
    <location>
        <position position="326"/>
    </location>
</feature>
<accession>Q74ZF6</accession>
<keyword id="KW-0028">Amino-acid biosynthesis</keyword>
<keyword id="KW-0067">ATP-binding</keyword>
<keyword id="KW-0198">Cysteine biosynthesis</keyword>
<keyword id="KW-0963">Cytoplasm</keyword>
<keyword id="KW-0486">Methionine biosynthesis</keyword>
<keyword id="KW-0547">Nucleotide-binding</keyword>
<keyword id="KW-0548">Nucleotidyltransferase</keyword>
<keyword id="KW-1185">Reference proteome</keyword>
<keyword id="KW-0808">Transferase</keyword>
<sequence length="500" mass="56463">MLSPHGGILQDLVARDAEKKDRLLHEAQGLPQWNLTARQLCDIELILNGGFSPLTGFLGKEDYESVVQNSRLTSGLLWTIPITLDVDEEFAKSVNLGERIALLQDDDIFVAIITVSDIYTPDKKVEADKVFRGDEEHPAIQYLNETAGDIYLGGELEAIQLPAHYDYLNLRKSPAALRADFATQQWDRVVAFQTRNPMHRAHRELTIRAAKEHNAKVLLHPVVGLTKPGDIDYHTRIKVYKEIVKRYPEGIAQLALLPLAMRMAGDREAVWHAIIRKNYGATHFIVGRDHAGPGTNSKGDDFYGPYDAQVLVESYKNELGIEVVPFKLITYLPDKDIYLPVDEIDGSVKTLTISGTELRKRLREGTDIPDWFTYPEIVEILRQYNPPRYRQGFVIVVNHENPKRIANALLSTFLQVGGGRQYKIFDHQGQPQLLELIPDFVKSGTGLIVTSPLPSSVDAHNIYELNTYPSAHIKVSATEPVTEIVQKTVFFLEDNKFFQF</sequence>
<gene>
    <name evidence="1" type="primary">MET3</name>
    <name type="ordered locus">AGR322W</name>
</gene>
<evidence type="ECO:0000255" key="1">
    <source>
        <dbReference type="HAMAP-Rule" id="MF_03106"/>
    </source>
</evidence>
<comment type="function">
    <text evidence="1">Catalyzes the first intracellular reaction of sulfate assimilation, forming adenosine-5'-phosphosulfate (APS) from inorganic sulfate and ATP. Plays an important role in sulfate activation as a component of the biosynthesis pathway of sulfur-containing amino acids.</text>
</comment>
<comment type="catalytic activity">
    <reaction evidence="1">
        <text>sulfate + ATP + H(+) = adenosine 5'-phosphosulfate + diphosphate</text>
        <dbReference type="Rhea" id="RHEA:18133"/>
        <dbReference type="ChEBI" id="CHEBI:15378"/>
        <dbReference type="ChEBI" id="CHEBI:16189"/>
        <dbReference type="ChEBI" id="CHEBI:30616"/>
        <dbReference type="ChEBI" id="CHEBI:33019"/>
        <dbReference type="ChEBI" id="CHEBI:58243"/>
        <dbReference type="EC" id="2.7.7.4"/>
    </reaction>
</comment>
<comment type="pathway">
    <text evidence="1">Sulfur metabolism; hydrogen sulfide biosynthesis; sulfite from sulfate: step 1/3.</text>
</comment>
<comment type="subunit">
    <text evidence="1">Homohexamer. Dimer of trimers.</text>
</comment>
<comment type="subcellular location">
    <subcellularLocation>
        <location evidence="1">Cytoplasm</location>
    </subcellularLocation>
</comment>
<comment type="domain">
    <text evidence="1">The oligomerization domain is distantly related to APS kinases, but it is not functional and does not bind APS. It is required for oligomerization of the enzyme, although the oligomerization state has no effect on the catalytic activity of the enzyme.</text>
</comment>
<comment type="similarity">
    <text evidence="1">Belongs to the sulfate adenylyltransferase family.</text>
</comment>
<organism>
    <name type="scientific">Eremothecium gossypii (strain ATCC 10895 / CBS 109.51 / FGSC 9923 / NRRL Y-1056)</name>
    <name type="common">Yeast</name>
    <name type="synonym">Ashbya gossypii</name>
    <dbReference type="NCBI Taxonomy" id="284811"/>
    <lineage>
        <taxon>Eukaryota</taxon>
        <taxon>Fungi</taxon>
        <taxon>Dikarya</taxon>
        <taxon>Ascomycota</taxon>
        <taxon>Saccharomycotina</taxon>
        <taxon>Saccharomycetes</taxon>
        <taxon>Saccharomycetales</taxon>
        <taxon>Saccharomycetaceae</taxon>
        <taxon>Eremothecium</taxon>
    </lineage>
</organism>
<proteinExistence type="inferred from homology"/>
<name>MET3_EREGS</name>
<reference key="1">
    <citation type="journal article" date="2004" name="Science">
        <title>The Ashbya gossypii genome as a tool for mapping the ancient Saccharomyces cerevisiae genome.</title>
        <authorList>
            <person name="Dietrich F.S."/>
            <person name="Voegeli S."/>
            <person name="Brachat S."/>
            <person name="Lerch A."/>
            <person name="Gates K."/>
            <person name="Steiner S."/>
            <person name="Mohr C."/>
            <person name="Poehlmann R."/>
            <person name="Luedi P."/>
            <person name="Choi S."/>
            <person name="Wing R.A."/>
            <person name="Flavier A."/>
            <person name="Gaffney T.D."/>
            <person name="Philippsen P."/>
        </authorList>
    </citation>
    <scope>NUCLEOTIDE SEQUENCE [LARGE SCALE GENOMIC DNA]</scope>
    <source>
        <strain>ATCC 10895 / CBS 109.51 / FGSC 9923 / NRRL Y-1056</strain>
    </source>
</reference>
<reference key="2">
    <citation type="journal article" date="2013" name="G3 (Bethesda)">
        <title>Genomes of Ashbya fungi isolated from insects reveal four mating-type loci, numerous translocations, lack of transposons, and distinct gene duplications.</title>
        <authorList>
            <person name="Dietrich F.S."/>
            <person name="Voegeli S."/>
            <person name="Kuo S."/>
            <person name="Philippsen P."/>
        </authorList>
    </citation>
    <scope>GENOME REANNOTATION</scope>
    <source>
        <strain>ATCC 10895 / CBS 109.51 / FGSC 9923 / NRRL Y-1056</strain>
    </source>
</reference>